<protein>
    <recommendedName>
        <fullName evidence="1">Xanthine-guanine phosphoribosyltransferase</fullName>
        <shortName evidence="1">XGPRT</shortName>
        <ecNumber evidence="1">2.4.2.-</ecNumber>
        <ecNumber evidence="1">2.4.2.22</ecNumber>
    </recommendedName>
    <alternativeName>
        <fullName evidence="1">Xanthine phosphoribosyltransferase</fullName>
    </alternativeName>
</protein>
<dbReference type="EC" id="2.4.2.-" evidence="1"/>
<dbReference type="EC" id="2.4.2.22" evidence="1"/>
<dbReference type="EMBL" id="CP000802">
    <property type="protein sequence ID" value="ABV04655.1"/>
    <property type="molecule type" value="Genomic_DNA"/>
</dbReference>
<dbReference type="RefSeq" id="WP_001291990.1">
    <property type="nucleotide sequence ID" value="NC_009800.1"/>
</dbReference>
<dbReference type="SMR" id="A7ZWK1"/>
<dbReference type="GeneID" id="93777155"/>
<dbReference type="KEGG" id="ecx:EcHS_A0265"/>
<dbReference type="HOGENOM" id="CLU_080904_3_0_6"/>
<dbReference type="UniPathway" id="UPA00602">
    <property type="reaction ID" value="UER00658"/>
</dbReference>
<dbReference type="UniPathway" id="UPA00909">
    <property type="reaction ID" value="UER00887"/>
</dbReference>
<dbReference type="GO" id="GO:0005829">
    <property type="term" value="C:cytosol"/>
    <property type="evidence" value="ECO:0007669"/>
    <property type="project" value="TreeGrafter"/>
</dbReference>
<dbReference type="GO" id="GO:0005886">
    <property type="term" value="C:plasma membrane"/>
    <property type="evidence" value="ECO:0007669"/>
    <property type="project" value="UniProtKB-SubCell"/>
</dbReference>
<dbReference type="GO" id="GO:0052657">
    <property type="term" value="F:guanine phosphoribosyltransferase activity"/>
    <property type="evidence" value="ECO:0007669"/>
    <property type="project" value="RHEA"/>
</dbReference>
<dbReference type="GO" id="GO:0004422">
    <property type="term" value="F:hypoxanthine phosphoribosyltransferase activity"/>
    <property type="evidence" value="ECO:0007669"/>
    <property type="project" value="TreeGrafter"/>
</dbReference>
<dbReference type="GO" id="GO:0000287">
    <property type="term" value="F:magnesium ion binding"/>
    <property type="evidence" value="ECO:0007669"/>
    <property type="project" value="UniProtKB-UniRule"/>
</dbReference>
<dbReference type="GO" id="GO:0000310">
    <property type="term" value="F:xanthine phosphoribosyltransferase activity"/>
    <property type="evidence" value="ECO:0007669"/>
    <property type="project" value="UniProtKB-UniRule"/>
</dbReference>
<dbReference type="GO" id="GO:0032263">
    <property type="term" value="P:GMP salvage"/>
    <property type="evidence" value="ECO:0007669"/>
    <property type="project" value="UniProtKB-UniRule"/>
</dbReference>
<dbReference type="GO" id="GO:0032264">
    <property type="term" value="P:IMP salvage"/>
    <property type="evidence" value="ECO:0007669"/>
    <property type="project" value="TreeGrafter"/>
</dbReference>
<dbReference type="GO" id="GO:0006166">
    <property type="term" value="P:purine ribonucleoside salvage"/>
    <property type="evidence" value="ECO:0007669"/>
    <property type="project" value="UniProtKB-KW"/>
</dbReference>
<dbReference type="GO" id="GO:0032265">
    <property type="term" value="P:XMP salvage"/>
    <property type="evidence" value="ECO:0007669"/>
    <property type="project" value="UniProtKB-UniRule"/>
</dbReference>
<dbReference type="CDD" id="cd06223">
    <property type="entry name" value="PRTases_typeI"/>
    <property type="match status" value="1"/>
</dbReference>
<dbReference type="FunFam" id="3.40.50.2020:FF:000009">
    <property type="entry name" value="Xanthine phosphoribosyltransferase"/>
    <property type="match status" value="1"/>
</dbReference>
<dbReference type="Gene3D" id="3.40.50.2020">
    <property type="match status" value="1"/>
</dbReference>
<dbReference type="HAMAP" id="MF_01903">
    <property type="entry name" value="XGPRT"/>
    <property type="match status" value="1"/>
</dbReference>
<dbReference type="InterPro" id="IPR000836">
    <property type="entry name" value="PRibTrfase_dom"/>
</dbReference>
<dbReference type="InterPro" id="IPR029057">
    <property type="entry name" value="PRTase-like"/>
</dbReference>
<dbReference type="InterPro" id="IPR023747">
    <property type="entry name" value="Xanthine_Guanine_PRibTrfase"/>
</dbReference>
<dbReference type="NCBIfam" id="NF006613">
    <property type="entry name" value="PRK09177.1"/>
    <property type="match status" value="1"/>
</dbReference>
<dbReference type="PANTHER" id="PTHR39563">
    <property type="entry name" value="XANTHINE PHOSPHORIBOSYLTRANSFERASE"/>
    <property type="match status" value="1"/>
</dbReference>
<dbReference type="PANTHER" id="PTHR39563:SF1">
    <property type="entry name" value="XANTHINE-GUANINE PHOSPHORIBOSYLTRANSFERASE"/>
    <property type="match status" value="1"/>
</dbReference>
<dbReference type="Pfam" id="PF00156">
    <property type="entry name" value="Pribosyltran"/>
    <property type="match status" value="1"/>
</dbReference>
<dbReference type="SUPFAM" id="SSF53271">
    <property type="entry name" value="PRTase-like"/>
    <property type="match status" value="1"/>
</dbReference>
<dbReference type="PROSITE" id="PS00103">
    <property type="entry name" value="PUR_PYR_PR_TRANSFER"/>
    <property type="match status" value="1"/>
</dbReference>
<comment type="function">
    <text evidence="1">Purine salvage pathway enzyme that catalyzes the transfer of the ribosyl-5-phosphate group from 5-phospho-alpha-D-ribose 1-diphosphate (PRPP) to the N9 position of the 6-oxopurines guanine and xanthine to form the corresponding ribonucleotides GMP (guanosine 5'-monophosphate) and XMP (xanthosine 5'-monophosphate), with the release of PPi. To a lesser extent, also acts on hypoxanthine.</text>
</comment>
<comment type="catalytic activity">
    <reaction evidence="1">
        <text>GMP + diphosphate = guanine + 5-phospho-alpha-D-ribose 1-diphosphate</text>
        <dbReference type="Rhea" id="RHEA:25424"/>
        <dbReference type="ChEBI" id="CHEBI:16235"/>
        <dbReference type="ChEBI" id="CHEBI:33019"/>
        <dbReference type="ChEBI" id="CHEBI:58017"/>
        <dbReference type="ChEBI" id="CHEBI:58115"/>
    </reaction>
    <physiologicalReaction direction="right-to-left" evidence="1">
        <dbReference type="Rhea" id="RHEA:25426"/>
    </physiologicalReaction>
</comment>
<comment type="catalytic activity">
    <reaction evidence="1">
        <text>XMP + diphosphate = xanthine + 5-phospho-alpha-D-ribose 1-diphosphate</text>
        <dbReference type="Rhea" id="RHEA:10800"/>
        <dbReference type="ChEBI" id="CHEBI:17712"/>
        <dbReference type="ChEBI" id="CHEBI:33019"/>
        <dbReference type="ChEBI" id="CHEBI:57464"/>
        <dbReference type="ChEBI" id="CHEBI:58017"/>
        <dbReference type="EC" id="2.4.2.22"/>
    </reaction>
    <physiologicalReaction direction="right-to-left" evidence="1">
        <dbReference type="Rhea" id="RHEA:10802"/>
    </physiologicalReaction>
</comment>
<comment type="catalytic activity">
    <reaction evidence="1">
        <text>IMP + diphosphate = hypoxanthine + 5-phospho-alpha-D-ribose 1-diphosphate</text>
        <dbReference type="Rhea" id="RHEA:17973"/>
        <dbReference type="ChEBI" id="CHEBI:17368"/>
        <dbReference type="ChEBI" id="CHEBI:33019"/>
        <dbReference type="ChEBI" id="CHEBI:58017"/>
        <dbReference type="ChEBI" id="CHEBI:58053"/>
    </reaction>
    <physiologicalReaction direction="right-to-left" evidence="1">
        <dbReference type="Rhea" id="RHEA:17975"/>
    </physiologicalReaction>
</comment>
<comment type="cofactor">
    <cofactor evidence="1">
        <name>Mg(2+)</name>
        <dbReference type="ChEBI" id="CHEBI:18420"/>
    </cofactor>
</comment>
<comment type="pathway">
    <text evidence="1">Purine metabolism; GMP biosynthesis via salvage pathway; GMP from guanine: step 1/1.</text>
</comment>
<comment type="pathway">
    <text evidence="1">Purine metabolism; XMP biosynthesis via salvage pathway; XMP from xanthine: step 1/1.</text>
</comment>
<comment type="subunit">
    <text evidence="1">Homotetramer.</text>
</comment>
<comment type="subcellular location">
    <subcellularLocation>
        <location evidence="1">Cell inner membrane</location>
        <topology evidence="1">Peripheral membrane protein</topology>
    </subcellularLocation>
</comment>
<comment type="similarity">
    <text evidence="1">Belongs to the purine/pyrimidine phosphoribosyltransferase family. XGPT subfamily.</text>
</comment>
<proteinExistence type="inferred from homology"/>
<organism>
    <name type="scientific">Escherichia coli O9:H4 (strain HS)</name>
    <dbReference type="NCBI Taxonomy" id="331112"/>
    <lineage>
        <taxon>Bacteria</taxon>
        <taxon>Pseudomonadati</taxon>
        <taxon>Pseudomonadota</taxon>
        <taxon>Gammaproteobacteria</taxon>
        <taxon>Enterobacterales</taxon>
        <taxon>Enterobacteriaceae</taxon>
        <taxon>Escherichia</taxon>
    </lineage>
</organism>
<reference key="1">
    <citation type="journal article" date="2008" name="J. Bacteriol.">
        <title>The pangenome structure of Escherichia coli: comparative genomic analysis of E. coli commensal and pathogenic isolates.</title>
        <authorList>
            <person name="Rasko D.A."/>
            <person name="Rosovitz M.J."/>
            <person name="Myers G.S.A."/>
            <person name="Mongodin E.F."/>
            <person name="Fricke W.F."/>
            <person name="Gajer P."/>
            <person name="Crabtree J."/>
            <person name="Sebaihia M."/>
            <person name="Thomson N.R."/>
            <person name="Chaudhuri R."/>
            <person name="Henderson I.R."/>
            <person name="Sperandio V."/>
            <person name="Ravel J."/>
        </authorList>
    </citation>
    <scope>NUCLEOTIDE SEQUENCE [LARGE SCALE GENOMIC DNA]</scope>
    <source>
        <strain>HS</strain>
    </source>
</reference>
<accession>A7ZWK1</accession>
<feature type="chain" id="PRO_1000070606" description="Xanthine-guanine phosphoribosyltransferase">
    <location>
        <begin position="1"/>
        <end position="152"/>
    </location>
</feature>
<feature type="binding site" evidence="1">
    <location>
        <begin position="37"/>
        <end position="38"/>
    </location>
    <ligand>
        <name>5-phospho-alpha-D-ribose 1-diphosphate</name>
        <dbReference type="ChEBI" id="CHEBI:58017"/>
    </ligand>
</feature>
<feature type="binding site" evidence="1">
    <location>
        <position position="69"/>
    </location>
    <ligand>
        <name>5-phospho-alpha-D-ribose 1-diphosphate</name>
        <dbReference type="ChEBI" id="CHEBI:58017"/>
    </ligand>
</feature>
<feature type="binding site" evidence="1">
    <location>
        <position position="69"/>
    </location>
    <ligand>
        <name>GMP</name>
        <dbReference type="ChEBI" id="CHEBI:58115"/>
    </ligand>
</feature>
<feature type="binding site" evidence="1">
    <location>
        <begin position="88"/>
        <end position="96"/>
    </location>
    <ligand>
        <name>5-phospho-alpha-D-ribose 1-diphosphate</name>
        <dbReference type="ChEBI" id="CHEBI:58017"/>
    </ligand>
</feature>
<feature type="binding site" evidence="1">
    <location>
        <position position="89"/>
    </location>
    <ligand>
        <name>Mg(2+)</name>
        <dbReference type="ChEBI" id="CHEBI:18420"/>
    </ligand>
</feature>
<feature type="binding site" evidence="1">
    <location>
        <begin position="92"/>
        <end position="96"/>
    </location>
    <ligand>
        <name>GMP</name>
        <dbReference type="ChEBI" id="CHEBI:58115"/>
    </ligand>
</feature>
<feature type="binding site" evidence="1">
    <location>
        <position position="92"/>
    </location>
    <ligand>
        <name>guanine</name>
        <dbReference type="ChEBI" id="CHEBI:16235"/>
    </ligand>
</feature>
<feature type="binding site" evidence="1">
    <location>
        <position position="92"/>
    </location>
    <ligand>
        <name>xanthine</name>
        <dbReference type="ChEBI" id="CHEBI:17712"/>
    </ligand>
</feature>
<feature type="binding site" evidence="1">
    <location>
        <begin position="134"/>
        <end position="135"/>
    </location>
    <ligand>
        <name>GMP</name>
        <dbReference type="ChEBI" id="CHEBI:58115"/>
    </ligand>
</feature>
<feature type="binding site" evidence="1">
    <location>
        <position position="135"/>
    </location>
    <ligand>
        <name>guanine</name>
        <dbReference type="ChEBI" id="CHEBI:16235"/>
    </ligand>
</feature>
<feature type="binding site" evidence="1">
    <location>
        <position position="135"/>
    </location>
    <ligand>
        <name>xanthine</name>
        <dbReference type="ChEBI" id="CHEBI:17712"/>
    </ligand>
</feature>
<name>XGPT_ECOHS</name>
<sequence length="152" mass="16971">MSEKYIVTWDMLQIHARKLASRLMPSEQWKGIIAVSRGGLVPGALLARELGIRHVDTVCISSYDHDNQRELKVLKRAEGDGEGFIVIDDLVDTGGTAVAIREMYPKAHFVTIFAKPAGRPLVDDYVVDIPQDTWIEQPWDMGVVFVPPISGR</sequence>
<evidence type="ECO:0000255" key="1">
    <source>
        <dbReference type="HAMAP-Rule" id="MF_01903"/>
    </source>
</evidence>
<keyword id="KW-0997">Cell inner membrane</keyword>
<keyword id="KW-1003">Cell membrane</keyword>
<keyword id="KW-0328">Glycosyltransferase</keyword>
<keyword id="KW-0460">Magnesium</keyword>
<keyword id="KW-0472">Membrane</keyword>
<keyword id="KW-0479">Metal-binding</keyword>
<keyword id="KW-0660">Purine salvage</keyword>
<keyword id="KW-0808">Transferase</keyword>
<gene>
    <name evidence="1" type="primary">gpt</name>
    <name type="ordered locus">EcHS_A0265</name>
</gene>